<evidence type="ECO:0000255" key="1">
    <source>
        <dbReference type="HAMAP-Rule" id="MF_00176"/>
    </source>
</evidence>
<dbReference type="EC" id="6.1.1.11" evidence="1"/>
<dbReference type="EMBL" id="CP001291">
    <property type="protein sequence ID" value="ACK70260.1"/>
    <property type="molecule type" value="Genomic_DNA"/>
</dbReference>
<dbReference type="RefSeq" id="WP_012599203.1">
    <property type="nucleotide sequence ID" value="NC_011729.1"/>
</dbReference>
<dbReference type="SMR" id="B7KCF5"/>
<dbReference type="STRING" id="65393.PCC7424_1828"/>
<dbReference type="KEGG" id="cyc:PCC7424_1828"/>
<dbReference type="eggNOG" id="COG0172">
    <property type="taxonomic scope" value="Bacteria"/>
</dbReference>
<dbReference type="HOGENOM" id="CLU_023797_1_1_3"/>
<dbReference type="OrthoDB" id="9804647at2"/>
<dbReference type="UniPathway" id="UPA00906">
    <property type="reaction ID" value="UER00895"/>
</dbReference>
<dbReference type="Proteomes" id="UP000002384">
    <property type="component" value="Chromosome"/>
</dbReference>
<dbReference type="GO" id="GO:0005737">
    <property type="term" value="C:cytoplasm"/>
    <property type="evidence" value="ECO:0007669"/>
    <property type="project" value="UniProtKB-SubCell"/>
</dbReference>
<dbReference type="GO" id="GO:0005524">
    <property type="term" value="F:ATP binding"/>
    <property type="evidence" value="ECO:0007669"/>
    <property type="project" value="UniProtKB-UniRule"/>
</dbReference>
<dbReference type="GO" id="GO:0004828">
    <property type="term" value="F:serine-tRNA ligase activity"/>
    <property type="evidence" value="ECO:0007669"/>
    <property type="project" value="UniProtKB-UniRule"/>
</dbReference>
<dbReference type="GO" id="GO:0016260">
    <property type="term" value="P:selenocysteine biosynthetic process"/>
    <property type="evidence" value="ECO:0007669"/>
    <property type="project" value="UniProtKB-UniRule"/>
</dbReference>
<dbReference type="GO" id="GO:0006434">
    <property type="term" value="P:seryl-tRNA aminoacylation"/>
    <property type="evidence" value="ECO:0007669"/>
    <property type="project" value="UniProtKB-UniRule"/>
</dbReference>
<dbReference type="CDD" id="cd00770">
    <property type="entry name" value="SerRS_core"/>
    <property type="match status" value="1"/>
</dbReference>
<dbReference type="Gene3D" id="3.30.930.10">
    <property type="entry name" value="Bira Bifunctional Protein, Domain 2"/>
    <property type="match status" value="1"/>
</dbReference>
<dbReference type="Gene3D" id="1.10.287.40">
    <property type="entry name" value="Serine-tRNA synthetase, tRNA binding domain"/>
    <property type="match status" value="1"/>
</dbReference>
<dbReference type="HAMAP" id="MF_00176">
    <property type="entry name" value="Ser_tRNA_synth_type1"/>
    <property type="match status" value="1"/>
</dbReference>
<dbReference type="InterPro" id="IPR002314">
    <property type="entry name" value="aa-tRNA-synt_IIb"/>
</dbReference>
<dbReference type="InterPro" id="IPR006195">
    <property type="entry name" value="aa-tRNA-synth_II"/>
</dbReference>
<dbReference type="InterPro" id="IPR045864">
    <property type="entry name" value="aa-tRNA-synth_II/BPL/LPL"/>
</dbReference>
<dbReference type="InterPro" id="IPR002317">
    <property type="entry name" value="Ser-tRNA-ligase_type_1"/>
</dbReference>
<dbReference type="InterPro" id="IPR015866">
    <property type="entry name" value="Ser-tRNA-synth_1_N"/>
</dbReference>
<dbReference type="InterPro" id="IPR042103">
    <property type="entry name" value="SerRS_1_N_sf"/>
</dbReference>
<dbReference type="InterPro" id="IPR033729">
    <property type="entry name" value="SerRS_core"/>
</dbReference>
<dbReference type="InterPro" id="IPR010978">
    <property type="entry name" value="tRNA-bd_arm"/>
</dbReference>
<dbReference type="NCBIfam" id="TIGR00414">
    <property type="entry name" value="serS"/>
    <property type="match status" value="1"/>
</dbReference>
<dbReference type="PANTHER" id="PTHR43697:SF1">
    <property type="entry name" value="SERINE--TRNA LIGASE"/>
    <property type="match status" value="1"/>
</dbReference>
<dbReference type="PANTHER" id="PTHR43697">
    <property type="entry name" value="SERYL-TRNA SYNTHETASE"/>
    <property type="match status" value="1"/>
</dbReference>
<dbReference type="Pfam" id="PF02403">
    <property type="entry name" value="Seryl_tRNA_N"/>
    <property type="match status" value="1"/>
</dbReference>
<dbReference type="Pfam" id="PF00587">
    <property type="entry name" value="tRNA-synt_2b"/>
    <property type="match status" value="1"/>
</dbReference>
<dbReference type="PIRSF" id="PIRSF001529">
    <property type="entry name" value="Ser-tRNA-synth_IIa"/>
    <property type="match status" value="1"/>
</dbReference>
<dbReference type="PRINTS" id="PR00981">
    <property type="entry name" value="TRNASYNTHSER"/>
</dbReference>
<dbReference type="SUPFAM" id="SSF55681">
    <property type="entry name" value="Class II aaRS and biotin synthetases"/>
    <property type="match status" value="1"/>
</dbReference>
<dbReference type="SUPFAM" id="SSF46589">
    <property type="entry name" value="tRNA-binding arm"/>
    <property type="match status" value="1"/>
</dbReference>
<dbReference type="PROSITE" id="PS50862">
    <property type="entry name" value="AA_TRNA_LIGASE_II"/>
    <property type="match status" value="1"/>
</dbReference>
<proteinExistence type="inferred from homology"/>
<reference key="1">
    <citation type="journal article" date="2011" name="MBio">
        <title>Novel metabolic attributes of the genus Cyanothece, comprising a group of unicellular nitrogen-fixing Cyanobacteria.</title>
        <authorList>
            <person name="Bandyopadhyay A."/>
            <person name="Elvitigala T."/>
            <person name="Welsh E."/>
            <person name="Stockel J."/>
            <person name="Liberton M."/>
            <person name="Min H."/>
            <person name="Sherman L.A."/>
            <person name="Pakrasi H.B."/>
        </authorList>
    </citation>
    <scope>NUCLEOTIDE SEQUENCE [LARGE SCALE GENOMIC DNA]</scope>
    <source>
        <strain>PCC 7424</strain>
    </source>
</reference>
<feature type="chain" id="PRO_1000199468" description="Serine--tRNA ligase">
    <location>
        <begin position="1"/>
        <end position="430"/>
    </location>
</feature>
<feature type="binding site" evidence="1">
    <location>
        <begin position="236"/>
        <end position="238"/>
    </location>
    <ligand>
        <name>L-serine</name>
        <dbReference type="ChEBI" id="CHEBI:33384"/>
    </ligand>
</feature>
<feature type="binding site" evidence="1">
    <location>
        <begin position="267"/>
        <end position="269"/>
    </location>
    <ligand>
        <name>ATP</name>
        <dbReference type="ChEBI" id="CHEBI:30616"/>
    </ligand>
</feature>
<feature type="binding site" evidence="1">
    <location>
        <position position="290"/>
    </location>
    <ligand>
        <name>L-serine</name>
        <dbReference type="ChEBI" id="CHEBI:33384"/>
    </ligand>
</feature>
<feature type="binding site" evidence="1">
    <location>
        <begin position="354"/>
        <end position="357"/>
    </location>
    <ligand>
        <name>ATP</name>
        <dbReference type="ChEBI" id="CHEBI:30616"/>
    </ligand>
</feature>
<feature type="binding site" evidence="1">
    <location>
        <position position="390"/>
    </location>
    <ligand>
        <name>L-serine</name>
        <dbReference type="ChEBI" id="CHEBI:33384"/>
    </ligand>
</feature>
<sequence length="430" mass="48653">MLDIKQIRENPELVQEKLNRRSAAKDYDLTPILQLDERQRELESSRVQLQTRGNEISKLIPQKIKGGSDPKGEEIKALKEEGNTVKNQLSSLEPQEKEIKAQIESLLLQLPNLPSDSTPLGKDETENVEIRRWGDEYLPKIKVLPHWEIGEKLGILDFERAVKVAQSRFVNLIGAGAALERALINFMLDRQIEAGYLEVMPPILINTTSLQGTGQLPKFSEESFKCSEDELWLAPTAEVPVTNLYRDNVIEGEQLPIKHCAYTPCFRREAGSYGKDTRGLIRLHQFNKVELVKLVHPETSEAEHEALVKDAEAILQALKLPYRVIELCTGDLGFGAAKCYDIEVWLPSSDTYREISSCSNFRDFQARRANIRFKEKGKKGTQYVHTLNGSGLAIGRTMSAILENYQQEDGTIKVPEVLQPYLKREVIGKS</sequence>
<name>SYS_GLOC7</name>
<keyword id="KW-0030">Aminoacyl-tRNA synthetase</keyword>
<keyword id="KW-0067">ATP-binding</keyword>
<keyword id="KW-0963">Cytoplasm</keyword>
<keyword id="KW-0436">Ligase</keyword>
<keyword id="KW-0547">Nucleotide-binding</keyword>
<keyword id="KW-0648">Protein biosynthesis</keyword>
<keyword id="KW-1185">Reference proteome</keyword>
<organism>
    <name type="scientific">Gloeothece citriformis (strain PCC 7424)</name>
    <name type="common">Cyanothece sp. (strain PCC 7424)</name>
    <dbReference type="NCBI Taxonomy" id="65393"/>
    <lineage>
        <taxon>Bacteria</taxon>
        <taxon>Bacillati</taxon>
        <taxon>Cyanobacteriota</taxon>
        <taxon>Cyanophyceae</taxon>
        <taxon>Oscillatoriophycideae</taxon>
        <taxon>Chroococcales</taxon>
        <taxon>Aphanothecaceae</taxon>
        <taxon>Gloeothece</taxon>
        <taxon>Gloeothece citriformis</taxon>
    </lineage>
</organism>
<accession>B7KCF5</accession>
<comment type="function">
    <text evidence="1">Catalyzes the attachment of serine to tRNA(Ser). Is also able to aminoacylate tRNA(Sec) with serine, to form the misacylated tRNA L-seryl-tRNA(Sec), which will be further converted into selenocysteinyl-tRNA(Sec).</text>
</comment>
<comment type="catalytic activity">
    <reaction evidence="1">
        <text>tRNA(Ser) + L-serine + ATP = L-seryl-tRNA(Ser) + AMP + diphosphate + H(+)</text>
        <dbReference type="Rhea" id="RHEA:12292"/>
        <dbReference type="Rhea" id="RHEA-COMP:9669"/>
        <dbReference type="Rhea" id="RHEA-COMP:9703"/>
        <dbReference type="ChEBI" id="CHEBI:15378"/>
        <dbReference type="ChEBI" id="CHEBI:30616"/>
        <dbReference type="ChEBI" id="CHEBI:33019"/>
        <dbReference type="ChEBI" id="CHEBI:33384"/>
        <dbReference type="ChEBI" id="CHEBI:78442"/>
        <dbReference type="ChEBI" id="CHEBI:78533"/>
        <dbReference type="ChEBI" id="CHEBI:456215"/>
        <dbReference type="EC" id="6.1.1.11"/>
    </reaction>
</comment>
<comment type="catalytic activity">
    <reaction evidence="1">
        <text>tRNA(Sec) + L-serine + ATP = L-seryl-tRNA(Sec) + AMP + diphosphate + H(+)</text>
        <dbReference type="Rhea" id="RHEA:42580"/>
        <dbReference type="Rhea" id="RHEA-COMP:9742"/>
        <dbReference type="Rhea" id="RHEA-COMP:10128"/>
        <dbReference type="ChEBI" id="CHEBI:15378"/>
        <dbReference type="ChEBI" id="CHEBI:30616"/>
        <dbReference type="ChEBI" id="CHEBI:33019"/>
        <dbReference type="ChEBI" id="CHEBI:33384"/>
        <dbReference type="ChEBI" id="CHEBI:78442"/>
        <dbReference type="ChEBI" id="CHEBI:78533"/>
        <dbReference type="ChEBI" id="CHEBI:456215"/>
        <dbReference type="EC" id="6.1.1.11"/>
    </reaction>
</comment>
<comment type="pathway">
    <text evidence="1">Aminoacyl-tRNA biosynthesis; selenocysteinyl-tRNA(Sec) biosynthesis; L-seryl-tRNA(Sec) from L-serine and tRNA(Sec): step 1/1.</text>
</comment>
<comment type="subunit">
    <text evidence="1">Homodimer. The tRNA molecule binds across the dimer.</text>
</comment>
<comment type="subcellular location">
    <subcellularLocation>
        <location evidence="1">Cytoplasm</location>
    </subcellularLocation>
</comment>
<comment type="domain">
    <text evidence="1">Consists of two distinct domains, a catalytic core and a N-terminal extension that is involved in tRNA binding.</text>
</comment>
<comment type="similarity">
    <text evidence="1">Belongs to the class-II aminoacyl-tRNA synthetase family. Type-1 seryl-tRNA synthetase subfamily.</text>
</comment>
<protein>
    <recommendedName>
        <fullName evidence="1">Serine--tRNA ligase</fullName>
        <ecNumber evidence="1">6.1.1.11</ecNumber>
    </recommendedName>
    <alternativeName>
        <fullName evidence="1">Seryl-tRNA synthetase</fullName>
        <shortName evidence="1">SerRS</shortName>
    </alternativeName>
    <alternativeName>
        <fullName evidence="1">Seryl-tRNA(Ser/Sec) synthetase</fullName>
    </alternativeName>
</protein>
<gene>
    <name evidence="1" type="primary">serS</name>
    <name type="ordered locus">PCC7424_1828</name>
</gene>